<sequence>MSATDFDSLYQLIFNAGLVICFGLGVISGGQR</sequence>
<organism>
    <name type="scientific">Escherichia phage If1</name>
    <name type="common">Bacteriophage If1</name>
    <dbReference type="NCBI Taxonomy" id="10868"/>
    <lineage>
        <taxon>Viruses</taxon>
        <taxon>Monodnaviria</taxon>
        <taxon>Loebvirae</taxon>
        <taxon>Hofneiviricota</taxon>
        <taxon>Faserviricetes</taxon>
        <taxon>Tubulavirales</taxon>
        <taxon>Inoviridae</taxon>
        <taxon>Infulavirus</taxon>
        <taxon>Infulavirus If1</taxon>
    </lineage>
</organism>
<protein>
    <recommendedName>
        <fullName>Tail virion protein G7P</fullName>
    </recommendedName>
    <alternativeName>
        <fullName>Coat protein C, polypeptide I</fullName>
    </alternativeName>
    <alternativeName>
        <fullName>Gene 7 protein</fullName>
        <shortName>G7P</shortName>
    </alternativeName>
</protein>
<dbReference type="EMBL" id="U02303">
    <property type="protein sequence ID" value="AAC62152.1"/>
    <property type="molecule type" value="Genomic_DNA"/>
</dbReference>
<dbReference type="RefSeq" id="NP_047353.1">
    <property type="nucleotide sequence ID" value="NC_001954.1"/>
</dbReference>
<dbReference type="SMR" id="O80295"/>
<dbReference type="GeneID" id="1261852"/>
<dbReference type="KEGG" id="vg:1261852"/>
<dbReference type="Proteomes" id="UP000001833">
    <property type="component" value="Genome"/>
</dbReference>
<dbReference type="GO" id="GO:0033644">
    <property type="term" value="C:host cell membrane"/>
    <property type="evidence" value="ECO:0007669"/>
    <property type="project" value="UniProtKB-SubCell"/>
</dbReference>
<dbReference type="GO" id="GO:0016020">
    <property type="term" value="C:membrane"/>
    <property type="evidence" value="ECO:0007669"/>
    <property type="project" value="UniProtKB-KW"/>
</dbReference>
<dbReference type="GO" id="GO:0044423">
    <property type="term" value="C:virion component"/>
    <property type="evidence" value="ECO:0007669"/>
    <property type="project" value="UniProtKB-KW"/>
</dbReference>
<dbReference type="InterPro" id="IPR045539">
    <property type="entry name" value="Inovirus_G7P_2"/>
</dbReference>
<dbReference type="Pfam" id="PF19978">
    <property type="entry name" value="Inovirus_G7P_2"/>
    <property type="match status" value="1"/>
</dbReference>
<feature type="chain" id="PRO_0000098179" description="Tail virion protein G7P">
    <location>
        <begin position="1"/>
        <end position="32"/>
    </location>
</feature>
<feature type="transmembrane region" description="Helical" evidence="2">
    <location>
        <begin position="9"/>
        <end position="29"/>
    </location>
</feature>
<name>G7P_BPIF1</name>
<organismHost>
    <name type="scientific">Escherichia coli</name>
    <dbReference type="NCBI Taxonomy" id="562"/>
</organismHost>
<proteinExistence type="inferred from homology"/>
<accession>O80295</accession>
<comment type="function">
    <text evidence="1">May initiate with G9P the virion concomitant assembly-budding process, by interacting with the packaging signal of the viral genome. The assembly-budding takes place at the host inner membrane. In turn, G7P and G9P are present at the end of the filamentous virion that emerges first from the bacterial host (By similarity).</text>
</comment>
<comment type="subcellular location">
    <subcellularLocation>
        <location evidence="3">Virion</location>
    </subcellularLocation>
    <subcellularLocation>
        <location evidence="3">Host membrane</location>
        <topology evidence="3">Single-pass membrane protein</topology>
    </subcellularLocation>
    <text evidence="1">Prior to assembly, is found associated with the bacterial host inner membrane. There are about five copies of this protein per mature phage that are located on the tail side of the filamentous virion with G9P (By similarity).</text>
</comment>
<comment type="similarity">
    <text evidence="3">Belongs to the inovirus G7P protein family.</text>
</comment>
<gene>
    <name type="primary">VII</name>
</gene>
<reference key="1">
    <citation type="submission" date="1993-10" db="EMBL/GenBank/DDBJ databases">
        <title>DNA sequence of the filamentous coliphage If1.</title>
        <authorList>
            <person name="Hill D.F."/>
            <person name="Hughes G."/>
            <person name="McNaughton J.C."/>
            <person name="Stockwell P.A."/>
            <person name="Petersen G.B."/>
        </authorList>
    </citation>
    <scope>NUCLEOTIDE SEQUENCE [GENOMIC DNA]</scope>
</reference>
<keyword id="KW-1043">Host membrane</keyword>
<keyword id="KW-0472">Membrane</keyword>
<keyword id="KW-1185">Reference proteome</keyword>
<keyword id="KW-0812">Transmembrane</keyword>
<keyword id="KW-1133">Transmembrane helix</keyword>
<keyword id="KW-0946">Virion</keyword>
<evidence type="ECO:0000250" key="1"/>
<evidence type="ECO:0000255" key="2"/>
<evidence type="ECO:0000305" key="3"/>